<protein>
    <recommendedName>
        <fullName evidence="1">Endolysin</fullName>
        <ecNumber evidence="1">3.2.1.17</ecNumber>
    </recommendedName>
    <alternativeName>
        <fullName evidence="1">Lysis protein</fullName>
    </alternativeName>
    <alternativeName>
        <fullName evidence="1">Lysozyme</fullName>
    </alternativeName>
    <alternativeName>
        <fullName evidence="1">Muramidase</fullName>
    </alternativeName>
    <alternativeName>
        <fullName>P13</fullName>
    </alternativeName>
</protein>
<name>ENLYS_BPAPS</name>
<dbReference type="EC" id="3.2.1.17" evidence="1"/>
<dbReference type="EMBL" id="AF157835">
    <property type="protein sequence ID" value="AAF03956.1"/>
    <property type="molecule type" value="Genomic_DNA"/>
</dbReference>
<dbReference type="RefSeq" id="NP_050974.1">
    <property type="nucleotide sequence ID" value="NC_000935.1"/>
</dbReference>
<dbReference type="SMR" id="Q9T1T5"/>
<dbReference type="CAZy" id="GH24">
    <property type="family name" value="Glycoside Hydrolase Family 24"/>
</dbReference>
<dbReference type="KEGG" id="vg:1262307"/>
<dbReference type="Proteomes" id="UP000000853">
    <property type="component" value="Genome"/>
</dbReference>
<dbReference type="GO" id="GO:0030430">
    <property type="term" value="C:host cell cytoplasm"/>
    <property type="evidence" value="ECO:0007669"/>
    <property type="project" value="UniProtKB-SubCell"/>
</dbReference>
<dbReference type="GO" id="GO:0003796">
    <property type="term" value="F:lysozyme activity"/>
    <property type="evidence" value="ECO:0007669"/>
    <property type="project" value="UniProtKB-UniRule"/>
</dbReference>
<dbReference type="GO" id="GO:0016998">
    <property type="term" value="P:cell wall macromolecule catabolic process"/>
    <property type="evidence" value="ECO:0007669"/>
    <property type="project" value="InterPro"/>
</dbReference>
<dbReference type="GO" id="GO:0042742">
    <property type="term" value="P:defense response to bacterium"/>
    <property type="evidence" value="ECO:0007669"/>
    <property type="project" value="UniProtKB-KW"/>
</dbReference>
<dbReference type="GO" id="GO:0009253">
    <property type="term" value="P:peptidoglycan catabolic process"/>
    <property type="evidence" value="ECO:0007669"/>
    <property type="project" value="UniProtKB-UniRule"/>
</dbReference>
<dbReference type="GO" id="GO:0044659">
    <property type="term" value="P:viral release from host cell by cytolysis"/>
    <property type="evidence" value="ECO:0007669"/>
    <property type="project" value="UniProtKB-UniRule"/>
</dbReference>
<dbReference type="CDD" id="cd00737">
    <property type="entry name" value="lyz_endolysin_autolysin"/>
    <property type="match status" value="1"/>
</dbReference>
<dbReference type="Gene3D" id="1.10.530.40">
    <property type="match status" value="1"/>
</dbReference>
<dbReference type="HAMAP" id="MF_04110">
    <property type="entry name" value="ENDOLYSIN_T4"/>
    <property type="match status" value="1"/>
</dbReference>
<dbReference type="InterPro" id="IPR051018">
    <property type="entry name" value="Bacteriophage_GH24"/>
</dbReference>
<dbReference type="InterPro" id="IPR033907">
    <property type="entry name" value="Endolysin_autolysin"/>
</dbReference>
<dbReference type="InterPro" id="IPR034690">
    <property type="entry name" value="Endolysin_T4_type"/>
</dbReference>
<dbReference type="InterPro" id="IPR002196">
    <property type="entry name" value="Glyco_hydro_24"/>
</dbReference>
<dbReference type="InterPro" id="IPR023346">
    <property type="entry name" value="Lysozyme-like_dom_sf"/>
</dbReference>
<dbReference type="InterPro" id="IPR023347">
    <property type="entry name" value="Lysozyme_dom_sf"/>
</dbReference>
<dbReference type="PANTHER" id="PTHR38107">
    <property type="match status" value="1"/>
</dbReference>
<dbReference type="PANTHER" id="PTHR38107:SF3">
    <property type="entry name" value="LYSOZYME RRRD-RELATED"/>
    <property type="match status" value="1"/>
</dbReference>
<dbReference type="Pfam" id="PF00959">
    <property type="entry name" value="Phage_lysozyme"/>
    <property type="match status" value="1"/>
</dbReference>
<dbReference type="SUPFAM" id="SSF53955">
    <property type="entry name" value="Lysozyme-like"/>
    <property type="match status" value="1"/>
</dbReference>
<gene>
    <name type="primary">13</name>
</gene>
<proteinExistence type="inferred from homology"/>
<feature type="chain" id="PRO_0000218091" description="Endolysin">
    <location>
        <begin position="1"/>
        <end position="146"/>
    </location>
</feature>
<feature type="active site" description="Proton donor/acceptor" evidence="1">
    <location>
        <position position="15"/>
    </location>
</feature>
<feature type="active site" description="Proton donor/acceptor" evidence="1">
    <location>
        <position position="24"/>
    </location>
</feature>
<organism>
    <name type="scientific">Acyrthosiphon pisum secondary endosymbiont phage 1</name>
    <name type="common">Bacteriophage APSE-1</name>
    <dbReference type="NCBI Taxonomy" id="2682836"/>
    <lineage>
        <taxon>Viruses</taxon>
        <taxon>Duplodnaviria</taxon>
        <taxon>Heunggongvirae</taxon>
        <taxon>Uroviricota</taxon>
        <taxon>Caudoviricetes</taxon>
        <taxon>Sendosyvirus</taxon>
        <taxon>Sendosyvirus APSE1</taxon>
    </lineage>
</organism>
<accession>Q9T1T5</accession>
<keyword id="KW-0929">Antimicrobial</keyword>
<keyword id="KW-0081">Bacteriolytic enzyme</keyword>
<keyword id="KW-0204">Cytolysis</keyword>
<keyword id="KW-0326">Glycosidase</keyword>
<keyword id="KW-0578">Host cell lysis by virus</keyword>
<keyword id="KW-1035">Host cytoplasm</keyword>
<keyword id="KW-0378">Hydrolase</keyword>
<keyword id="KW-1185">Reference proteome</keyword>
<keyword id="KW-1188">Viral release from host cell</keyword>
<sequence length="146" mass="16330">MHISEKGLVLIKRYEGLRLKAYQCRAGRWTLGYGHTHNLNIGDVITQEQAEAFLREDIAQVTALLNTQIKVPLTQNQYDAICSLVFNIGMTAFTTSTLLKKLNVGDYSGASAEFMKWSKAKVNGKRTPLPGLIKRRQAEKALFESA</sequence>
<reference key="1">
    <citation type="journal article" date="1999" name="Virology">
        <title>Isolation and characterization of APSE-1, a bacteriophage infecting the secondary endosymbiont of acyrthosiphon pisum.</title>
        <authorList>
            <person name="van der Wilk F."/>
            <person name="Dullemans A.M."/>
            <person name="Verbeek M."/>
            <person name="van den Heuvel J.F.J.M."/>
        </authorList>
    </citation>
    <scope>NUCLEOTIDE SEQUENCE [LARGE SCALE GENOMIC DNA]</scope>
</reference>
<organismHost>
    <name type="scientific">Escherichia coli</name>
    <dbReference type="NCBI Taxonomy" id="562"/>
</organismHost>
<comment type="function">
    <text evidence="1">Endolysin with lysozyme activity that degrades host peptidoglycans and participates with the holin and spanin proteins in the sequential events which lead to the programmed host cell lysis releasing the mature viral particles. Once the holin has permeabilized the host cell membrane, the endolysin can reach the periplasm and break down the peptidoglycan layer.</text>
</comment>
<comment type="catalytic activity">
    <reaction evidence="1">
        <text>Hydrolysis of (1-&gt;4)-beta-linkages between N-acetylmuramic acid and N-acetyl-D-glucosamine residues in a peptidoglycan and between N-acetyl-D-glucosamine residues in chitodextrins.</text>
        <dbReference type="EC" id="3.2.1.17"/>
    </reaction>
</comment>
<comment type="subcellular location">
    <subcellularLocation>
        <location evidence="1">Host cytoplasm</location>
    </subcellularLocation>
    <text evidence="1">The endolysin is cytoplasmic, but can reach the periplasmic space with the help of the holins which disrupt the host cell membrane.</text>
</comment>
<comment type="similarity">
    <text evidence="1">Belongs to the glycosyl hydrolase 24 family.</text>
</comment>
<evidence type="ECO:0000255" key="1">
    <source>
        <dbReference type="HAMAP-Rule" id="MF_04110"/>
    </source>
</evidence>